<protein>
    <recommendedName>
        <fullName evidence="1">3-phenylpropionate/cinnamic acid dioxygenase ferredoxin--NAD(+) reductase component</fullName>
        <ecNumber evidence="1">1.18.1.3</ecNumber>
    </recommendedName>
</protein>
<name>HCAD_ECO5E</name>
<keyword id="KW-0058">Aromatic hydrocarbons catabolism</keyword>
<keyword id="KW-0274">FAD</keyword>
<keyword id="KW-0285">Flavoprotein</keyword>
<keyword id="KW-0520">NAD</keyword>
<keyword id="KW-0560">Oxidoreductase</keyword>
<proteinExistence type="inferred from homology"/>
<dbReference type="EC" id="1.18.1.3" evidence="1"/>
<dbReference type="EMBL" id="CP001164">
    <property type="protein sequence ID" value="ACI38045.1"/>
    <property type="molecule type" value="Genomic_DNA"/>
</dbReference>
<dbReference type="RefSeq" id="WP_000660766.1">
    <property type="nucleotide sequence ID" value="NC_011353.1"/>
</dbReference>
<dbReference type="SMR" id="B5Z115"/>
<dbReference type="KEGG" id="ecf:ECH74115_3774"/>
<dbReference type="HOGENOM" id="CLU_003291_4_0_6"/>
<dbReference type="UniPathway" id="UPA00714"/>
<dbReference type="GO" id="GO:0005737">
    <property type="term" value="C:cytoplasm"/>
    <property type="evidence" value="ECO:0007669"/>
    <property type="project" value="TreeGrafter"/>
</dbReference>
<dbReference type="GO" id="GO:0008695">
    <property type="term" value="F:3-phenylpropionate dioxygenase activity"/>
    <property type="evidence" value="ECO:0007669"/>
    <property type="project" value="UniProtKB-UniRule"/>
</dbReference>
<dbReference type="GO" id="GO:0008860">
    <property type="term" value="F:ferredoxin-NAD+ reductase activity"/>
    <property type="evidence" value="ECO:0007669"/>
    <property type="project" value="UniProtKB-EC"/>
</dbReference>
<dbReference type="GO" id="GO:0016651">
    <property type="term" value="F:oxidoreductase activity, acting on NAD(P)H"/>
    <property type="evidence" value="ECO:0007669"/>
    <property type="project" value="TreeGrafter"/>
</dbReference>
<dbReference type="GO" id="GO:0019380">
    <property type="term" value="P:3-phenylpropionate catabolic process"/>
    <property type="evidence" value="ECO:0007669"/>
    <property type="project" value="UniProtKB-UniRule"/>
</dbReference>
<dbReference type="FunFam" id="3.30.390.30:FF:000010">
    <property type="entry name" value="3-phenylpropionate/cinnamic acid dioxygenase ferredoxin--NAD(+) reductase component"/>
    <property type="match status" value="1"/>
</dbReference>
<dbReference type="FunFam" id="3.50.50.60:FF:000088">
    <property type="entry name" value="3-phenylpropionate/cinnamic acid dioxygenase ferredoxin--NAD(+) reductase component"/>
    <property type="match status" value="1"/>
</dbReference>
<dbReference type="Gene3D" id="3.30.390.30">
    <property type="match status" value="1"/>
</dbReference>
<dbReference type="Gene3D" id="3.50.50.60">
    <property type="entry name" value="FAD/NAD(P)-binding domain"/>
    <property type="match status" value="2"/>
</dbReference>
<dbReference type="HAMAP" id="MF_01651">
    <property type="entry name" value="HcaD"/>
    <property type="match status" value="1"/>
</dbReference>
<dbReference type="InterPro" id="IPR050446">
    <property type="entry name" value="FAD-oxidoreductase/Apoptosis"/>
</dbReference>
<dbReference type="InterPro" id="IPR036188">
    <property type="entry name" value="FAD/NAD-bd_sf"/>
</dbReference>
<dbReference type="InterPro" id="IPR023753">
    <property type="entry name" value="FAD/NAD-binding_dom"/>
</dbReference>
<dbReference type="InterPro" id="IPR016156">
    <property type="entry name" value="FAD/NAD-linked_Rdtase_dimer_sf"/>
</dbReference>
<dbReference type="InterPro" id="IPR023744">
    <property type="entry name" value="HcaD"/>
</dbReference>
<dbReference type="InterPro" id="IPR028202">
    <property type="entry name" value="Reductase_C"/>
</dbReference>
<dbReference type="InterPro" id="IPR053382">
    <property type="entry name" value="Ring-hydroxylating_dioxygenase"/>
</dbReference>
<dbReference type="NCBIfam" id="NF042949">
    <property type="entry name" value="3PPDioc_HcaD"/>
    <property type="match status" value="1"/>
</dbReference>
<dbReference type="NCBIfam" id="NF007286">
    <property type="entry name" value="PRK09754.1"/>
    <property type="match status" value="1"/>
</dbReference>
<dbReference type="PANTHER" id="PTHR43557">
    <property type="entry name" value="APOPTOSIS-INDUCING FACTOR 1"/>
    <property type="match status" value="1"/>
</dbReference>
<dbReference type="PANTHER" id="PTHR43557:SF2">
    <property type="entry name" value="RIESKE DOMAIN-CONTAINING PROTEIN-RELATED"/>
    <property type="match status" value="1"/>
</dbReference>
<dbReference type="Pfam" id="PF07992">
    <property type="entry name" value="Pyr_redox_2"/>
    <property type="match status" value="1"/>
</dbReference>
<dbReference type="Pfam" id="PF14759">
    <property type="entry name" value="Reductase_C"/>
    <property type="match status" value="1"/>
</dbReference>
<dbReference type="PRINTS" id="PR00368">
    <property type="entry name" value="FADPNR"/>
</dbReference>
<dbReference type="PRINTS" id="PR00411">
    <property type="entry name" value="PNDRDTASEI"/>
</dbReference>
<dbReference type="SUPFAM" id="SSF51905">
    <property type="entry name" value="FAD/NAD(P)-binding domain"/>
    <property type="match status" value="1"/>
</dbReference>
<dbReference type="SUPFAM" id="SSF55424">
    <property type="entry name" value="FAD/NAD-linked reductases, dimerisation (C-terminal) domain"/>
    <property type="match status" value="1"/>
</dbReference>
<comment type="function">
    <text evidence="1">Part of the multicomponent 3-phenylpropionate dioxygenase, that converts 3-phenylpropionic acid (PP) and cinnamic acid (CI) into 3-phenylpropionate-dihydrodiol (PP-dihydrodiol) and cinnamic acid-dihydrodiol (CI-dihydrodiol), respectively.</text>
</comment>
<comment type="catalytic activity">
    <reaction evidence="1">
        <text>2 reduced [2Fe-2S]-[ferredoxin] + NAD(+) + H(+) = 2 oxidized [2Fe-2S]-[ferredoxin] + NADH</text>
        <dbReference type="Rhea" id="RHEA:16521"/>
        <dbReference type="Rhea" id="RHEA-COMP:10000"/>
        <dbReference type="Rhea" id="RHEA-COMP:10001"/>
        <dbReference type="ChEBI" id="CHEBI:15378"/>
        <dbReference type="ChEBI" id="CHEBI:33737"/>
        <dbReference type="ChEBI" id="CHEBI:33738"/>
        <dbReference type="ChEBI" id="CHEBI:57540"/>
        <dbReference type="ChEBI" id="CHEBI:57945"/>
        <dbReference type="EC" id="1.18.1.3"/>
    </reaction>
</comment>
<comment type="cofactor">
    <cofactor evidence="1">
        <name>FAD</name>
        <dbReference type="ChEBI" id="CHEBI:57692"/>
    </cofactor>
</comment>
<comment type="pathway">
    <text evidence="1">Aromatic compound metabolism; 3-phenylpropanoate degradation.</text>
</comment>
<comment type="subunit">
    <text evidence="1">This dioxygenase system consists of four proteins: the two subunits of the hydroxylase component (HcaE and HcaF), a ferredoxin (HcaC) and a ferredoxin reductase (HcaD).</text>
</comment>
<comment type="similarity">
    <text evidence="1">Belongs to the bacterial ring-hydroxylating dioxygenase ferredoxin reductase family.</text>
</comment>
<evidence type="ECO:0000255" key="1">
    <source>
        <dbReference type="HAMAP-Rule" id="MF_01651"/>
    </source>
</evidence>
<reference key="1">
    <citation type="journal article" date="2011" name="Proc. Natl. Acad. Sci. U.S.A.">
        <title>Genomic anatomy of Escherichia coli O157:H7 outbreaks.</title>
        <authorList>
            <person name="Eppinger M."/>
            <person name="Mammel M.K."/>
            <person name="Leclerc J.E."/>
            <person name="Ravel J."/>
            <person name="Cebula T.A."/>
        </authorList>
    </citation>
    <scope>NUCLEOTIDE SEQUENCE [LARGE SCALE GENOMIC DNA]</scope>
    <source>
        <strain>EC4115 / EHEC</strain>
    </source>
</reference>
<sequence>MKEKTIIIVGGGQAAAMAAASLRQQGFTGELHLFSDEQHLPYERPPLSKSMLLEDSPQLQSVLPAHWWQENNVHLHSGVTIKTLGRDTRELVLANGESWHWDQLFIATGAAARPLPLLDALGERCFTLRHAGDAARLREVLQPERSVVIVGAGTIGLELAASATQRRCKVTVIELAATVMGRNAPPPVQRYLLQRHQQAGVRILLNNAIEHVVDGEKVELTLQSGETLQADVVIYGIGISANDQLAREANLDTTNGIVIDEACRTCDPAIFAGGDVAITRLDNGALHRCESWENANNHAQIAAAAMLGLPLPLLPPPWFWSDQYSDNLQFIGDMRGDDWLCRGNPETQKAIWFNLQNGVLIGAVTLNQGREIRSIRKWIQSGKTFDAKQLTDENIALKSL</sequence>
<accession>B5Z115</accession>
<gene>
    <name evidence="1" type="primary">hcaD</name>
    <name type="ordered locus">ECH74115_3774</name>
</gene>
<feature type="chain" id="PRO_1000186982" description="3-phenylpropionate/cinnamic acid dioxygenase ferredoxin--NAD(+) reductase component">
    <location>
        <begin position="1"/>
        <end position="400"/>
    </location>
</feature>
<feature type="binding site" evidence="1">
    <location>
        <begin position="5"/>
        <end position="36"/>
    </location>
    <ligand>
        <name>FAD</name>
        <dbReference type="ChEBI" id="CHEBI:57692"/>
    </ligand>
</feature>
<feature type="binding site" evidence="1">
    <location>
        <begin position="146"/>
        <end position="174"/>
    </location>
    <ligand>
        <name>NAD(+)</name>
        <dbReference type="ChEBI" id="CHEBI:57540"/>
    </ligand>
</feature>
<organism>
    <name type="scientific">Escherichia coli O157:H7 (strain EC4115 / EHEC)</name>
    <dbReference type="NCBI Taxonomy" id="444450"/>
    <lineage>
        <taxon>Bacteria</taxon>
        <taxon>Pseudomonadati</taxon>
        <taxon>Pseudomonadota</taxon>
        <taxon>Gammaproteobacteria</taxon>
        <taxon>Enterobacterales</taxon>
        <taxon>Enterobacteriaceae</taxon>
        <taxon>Escherichia</taxon>
    </lineage>
</organism>